<feature type="chain" id="PRO_0000049432" description="Cortical fragment-lytic enzyme">
    <location>
        <begin position="1"/>
        <end position="431"/>
    </location>
</feature>
<feature type="domain" description="LysM 1" evidence="2">
    <location>
        <begin position="2"/>
        <end position="46"/>
    </location>
</feature>
<feature type="domain" description="LysM 2" evidence="2">
    <location>
        <begin position="51"/>
        <end position="95"/>
    </location>
</feature>
<feature type="domain" description="GH18" evidence="3">
    <location>
        <begin position="103"/>
        <end position="431"/>
    </location>
</feature>
<feature type="active site" description="Proton donor" evidence="3">
    <location>
        <position position="217"/>
    </location>
</feature>
<feature type="binding site" evidence="3">
    <location>
        <begin position="148"/>
        <end position="149"/>
    </location>
    <ligand>
        <name>chitin</name>
        <dbReference type="ChEBI" id="CHEBI:17029"/>
    </ligand>
</feature>
<feature type="binding site" evidence="3">
    <location>
        <begin position="174"/>
        <end position="177"/>
    </location>
    <ligand>
        <name>chitin</name>
        <dbReference type="ChEBI" id="CHEBI:17029"/>
    </ligand>
</feature>
<feature type="binding site" evidence="3">
    <location>
        <position position="218"/>
    </location>
    <ligand>
        <name>chitin</name>
        <dbReference type="ChEBI" id="CHEBI:17029"/>
    </ligand>
</feature>
<feature type="binding site" evidence="3">
    <location>
        <begin position="280"/>
        <end position="283"/>
    </location>
    <ligand>
        <name>chitin</name>
        <dbReference type="ChEBI" id="CHEBI:17029"/>
    </ligand>
</feature>
<feature type="binding site" evidence="3">
    <location>
        <position position="406"/>
    </location>
    <ligand>
        <name>chitin</name>
        <dbReference type="ChEBI" id="CHEBI:17029"/>
    </ligand>
</feature>
<gene>
    <name evidence="1" type="primary">sleL</name>
    <name type="synonym">yaaH</name>
    <name type="ordered locus">BSU00160</name>
</gene>
<proteinExistence type="evidence at protein level"/>
<reference key="1">
    <citation type="journal article" date="1994" name="DNA Res.">
        <title>Systematic sequencing of the 180 kilobase region of the Bacillus subtilis chromosome containing the replication origin.</title>
        <authorList>
            <person name="Ogasawara N."/>
            <person name="Nakai S."/>
            <person name="Yoshikawa H."/>
        </authorList>
    </citation>
    <scope>NUCLEOTIDE SEQUENCE [GENOMIC DNA]</scope>
    <source>
        <strain>168</strain>
    </source>
</reference>
<reference key="2">
    <citation type="journal article" date="1997" name="Nature">
        <title>The complete genome sequence of the Gram-positive bacterium Bacillus subtilis.</title>
        <authorList>
            <person name="Kunst F."/>
            <person name="Ogasawara N."/>
            <person name="Moszer I."/>
            <person name="Albertini A.M."/>
            <person name="Alloni G."/>
            <person name="Azevedo V."/>
            <person name="Bertero M.G."/>
            <person name="Bessieres P."/>
            <person name="Bolotin A."/>
            <person name="Borchert S."/>
            <person name="Borriss R."/>
            <person name="Boursier L."/>
            <person name="Brans A."/>
            <person name="Braun M."/>
            <person name="Brignell S.C."/>
            <person name="Bron S."/>
            <person name="Brouillet S."/>
            <person name="Bruschi C.V."/>
            <person name="Caldwell B."/>
            <person name="Capuano V."/>
            <person name="Carter N.M."/>
            <person name="Choi S.-K."/>
            <person name="Codani J.-J."/>
            <person name="Connerton I.F."/>
            <person name="Cummings N.J."/>
            <person name="Daniel R.A."/>
            <person name="Denizot F."/>
            <person name="Devine K.M."/>
            <person name="Duesterhoeft A."/>
            <person name="Ehrlich S.D."/>
            <person name="Emmerson P.T."/>
            <person name="Entian K.-D."/>
            <person name="Errington J."/>
            <person name="Fabret C."/>
            <person name="Ferrari E."/>
            <person name="Foulger D."/>
            <person name="Fritz C."/>
            <person name="Fujita M."/>
            <person name="Fujita Y."/>
            <person name="Fuma S."/>
            <person name="Galizzi A."/>
            <person name="Galleron N."/>
            <person name="Ghim S.-Y."/>
            <person name="Glaser P."/>
            <person name="Goffeau A."/>
            <person name="Golightly E.J."/>
            <person name="Grandi G."/>
            <person name="Guiseppi G."/>
            <person name="Guy B.J."/>
            <person name="Haga K."/>
            <person name="Haiech J."/>
            <person name="Harwood C.R."/>
            <person name="Henaut A."/>
            <person name="Hilbert H."/>
            <person name="Holsappel S."/>
            <person name="Hosono S."/>
            <person name="Hullo M.-F."/>
            <person name="Itaya M."/>
            <person name="Jones L.-M."/>
            <person name="Joris B."/>
            <person name="Karamata D."/>
            <person name="Kasahara Y."/>
            <person name="Klaerr-Blanchard M."/>
            <person name="Klein C."/>
            <person name="Kobayashi Y."/>
            <person name="Koetter P."/>
            <person name="Koningstein G."/>
            <person name="Krogh S."/>
            <person name="Kumano M."/>
            <person name="Kurita K."/>
            <person name="Lapidus A."/>
            <person name="Lardinois S."/>
            <person name="Lauber J."/>
            <person name="Lazarevic V."/>
            <person name="Lee S.-M."/>
            <person name="Levine A."/>
            <person name="Liu H."/>
            <person name="Masuda S."/>
            <person name="Mauel C."/>
            <person name="Medigue C."/>
            <person name="Medina N."/>
            <person name="Mellado R.P."/>
            <person name="Mizuno M."/>
            <person name="Moestl D."/>
            <person name="Nakai S."/>
            <person name="Noback M."/>
            <person name="Noone D."/>
            <person name="O'Reilly M."/>
            <person name="Ogawa K."/>
            <person name="Ogiwara A."/>
            <person name="Oudega B."/>
            <person name="Park S.-H."/>
            <person name="Parro V."/>
            <person name="Pohl T.M."/>
            <person name="Portetelle D."/>
            <person name="Porwollik S."/>
            <person name="Prescott A.M."/>
            <person name="Presecan E."/>
            <person name="Pujic P."/>
            <person name="Purnelle B."/>
            <person name="Rapoport G."/>
            <person name="Rey M."/>
            <person name="Reynolds S."/>
            <person name="Rieger M."/>
            <person name="Rivolta C."/>
            <person name="Rocha E."/>
            <person name="Roche B."/>
            <person name="Rose M."/>
            <person name="Sadaie Y."/>
            <person name="Sato T."/>
            <person name="Scanlan E."/>
            <person name="Schleich S."/>
            <person name="Schroeter R."/>
            <person name="Scoffone F."/>
            <person name="Sekiguchi J."/>
            <person name="Sekowska A."/>
            <person name="Seror S.J."/>
            <person name="Serror P."/>
            <person name="Shin B.-S."/>
            <person name="Soldo B."/>
            <person name="Sorokin A."/>
            <person name="Tacconi E."/>
            <person name="Takagi T."/>
            <person name="Takahashi H."/>
            <person name="Takemaru K."/>
            <person name="Takeuchi M."/>
            <person name="Tamakoshi A."/>
            <person name="Tanaka T."/>
            <person name="Terpstra P."/>
            <person name="Tognoni A."/>
            <person name="Tosato V."/>
            <person name="Uchiyama S."/>
            <person name="Vandenbol M."/>
            <person name="Vannier F."/>
            <person name="Vassarotti A."/>
            <person name="Viari A."/>
            <person name="Wambutt R."/>
            <person name="Wedler E."/>
            <person name="Wedler H."/>
            <person name="Weitzenegger T."/>
            <person name="Winters P."/>
            <person name="Wipat A."/>
            <person name="Yamamoto H."/>
            <person name="Yamane K."/>
            <person name="Yasumoto K."/>
            <person name="Yata K."/>
            <person name="Yoshida K."/>
            <person name="Yoshikawa H.-F."/>
            <person name="Zumstein E."/>
            <person name="Yoshikawa H."/>
            <person name="Danchin A."/>
        </authorList>
    </citation>
    <scope>NUCLEOTIDE SEQUENCE [LARGE SCALE GENOMIC DNA]</scope>
    <source>
        <strain>168</strain>
    </source>
</reference>
<reference key="3">
    <citation type="journal article" date="2002" name="Microbiology">
        <title>Analysis of spore cortex lytic enzymes and related proteins in Bacillus subtilis endospore germination.</title>
        <authorList>
            <person name="Chirakkal H."/>
            <person name="O'Rourke M."/>
            <person name="Atrih A."/>
            <person name="Foster S.J."/>
            <person name="Moir A."/>
        </authorList>
    </citation>
    <scope>PROTEIN SEQUENCE OF 1-25</scope>
    <scope>DISRUPTION PHENOTYPE</scope>
</reference>
<reference key="4">
    <citation type="journal article" date="1999" name="J. Bacteriol.">
        <title>The Bacillus subtilis yaaH gene is transcribed by SigE RNA polymerase during sporulation, and its product is involved in germination of spores.</title>
        <authorList>
            <person name="Kodama T."/>
            <person name="Takamatsu H."/>
            <person name="Asai K."/>
            <person name="Kobayashi K."/>
            <person name="Ogasawara N."/>
            <person name="Watabe K."/>
        </authorList>
    </citation>
    <scope>DEVELOPMENTAL STAGE</scope>
    <scope>INDUCTION</scope>
    <scope>DISRUPTION PHENOTYPE</scope>
    <source>
        <strain>168</strain>
    </source>
</reference>
<reference key="5">
    <citation type="journal article" date="2010" name="J. Bacteriol.">
        <title>Localization of proteins to different layers and regions of Bacillus subtilis spore coats.</title>
        <authorList>
            <person name="Imamura D."/>
            <person name="Kuwana R."/>
            <person name="Takamatsu H."/>
            <person name="Watabe K."/>
        </authorList>
    </citation>
    <scope>SUBCELLULAR LOCATION</scope>
</reference>
<dbReference type="EC" id="3.2.1.-" evidence="1"/>
<dbReference type="EMBL" id="D26185">
    <property type="protein sequence ID" value="BAA05252.1"/>
    <property type="status" value="ALT_INIT"/>
    <property type="molecule type" value="Genomic_DNA"/>
</dbReference>
<dbReference type="EMBL" id="AL009126">
    <property type="protein sequence ID" value="CAB11792.1"/>
    <property type="status" value="ALT_INIT"/>
    <property type="molecule type" value="Genomic_DNA"/>
</dbReference>
<dbReference type="PIR" id="S66046">
    <property type="entry name" value="S66046"/>
</dbReference>
<dbReference type="RefSeq" id="NP_387897.1">
    <property type="nucleotide sequence ID" value="NC_000964.3"/>
</dbReference>
<dbReference type="RefSeq" id="WP_003247133.1">
    <property type="nucleotide sequence ID" value="NZ_OZ025638.1"/>
</dbReference>
<dbReference type="SMR" id="P37531"/>
<dbReference type="FunCoup" id="P37531">
    <property type="interactions" value="187"/>
</dbReference>
<dbReference type="STRING" id="224308.BSU00160"/>
<dbReference type="CAZy" id="CBM50">
    <property type="family name" value="Carbohydrate-Binding Module Family 50"/>
</dbReference>
<dbReference type="CAZy" id="GH18">
    <property type="family name" value="Glycoside Hydrolase Family 18"/>
</dbReference>
<dbReference type="PaxDb" id="224308-BSU00160"/>
<dbReference type="EnsemblBacteria" id="CAB11792">
    <property type="protein sequence ID" value="CAB11792"/>
    <property type="gene ID" value="BSU_00160"/>
</dbReference>
<dbReference type="GeneID" id="937029"/>
<dbReference type="KEGG" id="bsu:BSU00160"/>
<dbReference type="PATRIC" id="fig|224308.179.peg.16"/>
<dbReference type="eggNOG" id="COG1388">
    <property type="taxonomic scope" value="Bacteria"/>
</dbReference>
<dbReference type="eggNOG" id="COG3858">
    <property type="taxonomic scope" value="Bacteria"/>
</dbReference>
<dbReference type="InParanoid" id="P37531"/>
<dbReference type="OrthoDB" id="9769314at2"/>
<dbReference type="PhylomeDB" id="P37531"/>
<dbReference type="BioCyc" id="BSUB:BSU00160-MONOMER"/>
<dbReference type="Proteomes" id="UP000001570">
    <property type="component" value="Chromosome"/>
</dbReference>
<dbReference type="GO" id="GO:0012505">
    <property type="term" value="C:endomembrane system"/>
    <property type="evidence" value="ECO:0000318"/>
    <property type="project" value="GO_Central"/>
</dbReference>
<dbReference type="GO" id="GO:0008061">
    <property type="term" value="F:chitin binding"/>
    <property type="evidence" value="ECO:0007669"/>
    <property type="project" value="InterPro"/>
</dbReference>
<dbReference type="GO" id="GO:0016798">
    <property type="term" value="F:hydrolase activity, acting on glycosyl bonds"/>
    <property type="evidence" value="ECO:0007669"/>
    <property type="project" value="UniProtKB-KW"/>
</dbReference>
<dbReference type="GO" id="GO:0070492">
    <property type="term" value="F:oligosaccharide binding"/>
    <property type="evidence" value="ECO:0000318"/>
    <property type="project" value="GO_Central"/>
</dbReference>
<dbReference type="GO" id="GO:0005975">
    <property type="term" value="P:carbohydrate metabolic process"/>
    <property type="evidence" value="ECO:0007669"/>
    <property type="project" value="InterPro"/>
</dbReference>
<dbReference type="CDD" id="cd02874">
    <property type="entry name" value="GH18_CFLE_spore_hydrolase"/>
    <property type="match status" value="1"/>
</dbReference>
<dbReference type="CDD" id="cd00118">
    <property type="entry name" value="LysM"/>
    <property type="match status" value="2"/>
</dbReference>
<dbReference type="Gene3D" id="3.10.50.10">
    <property type="match status" value="1"/>
</dbReference>
<dbReference type="Gene3D" id="3.20.20.80">
    <property type="entry name" value="Glycosidases"/>
    <property type="match status" value="1"/>
</dbReference>
<dbReference type="Gene3D" id="3.10.350.10">
    <property type="entry name" value="LysM domain"/>
    <property type="match status" value="2"/>
</dbReference>
<dbReference type="InterPro" id="IPR041704">
    <property type="entry name" value="CFLE_GH18"/>
</dbReference>
<dbReference type="InterPro" id="IPR011583">
    <property type="entry name" value="Chitinase_II/V-like_cat"/>
</dbReference>
<dbReference type="InterPro" id="IPR029070">
    <property type="entry name" value="Chitinase_insertion_sf"/>
</dbReference>
<dbReference type="InterPro" id="IPR001223">
    <property type="entry name" value="Glyco_hydro18_cat"/>
</dbReference>
<dbReference type="InterPro" id="IPR017853">
    <property type="entry name" value="Glycoside_hydrolase_SF"/>
</dbReference>
<dbReference type="InterPro" id="IPR018392">
    <property type="entry name" value="LysM_dom"/>
</dbReference>
<dbReference type="InterPro" id="IPR036779">
    <property type="entry name" value="LysM_dom_sf"/>
</dbReference>
<dbReference type="PANTHER" id="PTHR46066:SF2">
    <property type="entry name" value="CHITINASE DOMAIN-CONTAINING PROTEIN 1"/>
    <property type="match status" value="1"/>
</dbReference>
<dbReference type="PANTHER" id="PTHR46066">
    <property type="entry name" value="CHITINASE DOMAIN-CONTAINING PROTEIN 1 FAMILY MEMBER"/>
    <property type="match status" value="1"/>
</dbReference>
<dbReference type="Pfam" id="PF00704">
    <property type="entry name" value="Glyco_hydro_18"/>
    <property type="match status" value="1"/>
</dbReference>
<dbReference type="Pfam" id="PF01476">
    <property type="entry name" value="LysM"/>
    <property type="match status" value="2"/>
</dbReference>
<dbReference type="SMART" id="SM00636">
    <property type="entry name" value="Glyco_18"/>
    <property type="match status" value="1"/>
</dbReference>
<dbReference type="SMART" id="SM00257">
    <property type="entry name" value="LysM"/>
    <property type="match status" value="2"/>
</dbReference>
<dbReference type="SUPFAM" id="SSF51445">
    <property type="entry name" value="(Trans)glycosidases"/>
    <property type="match status" value="1"/>
</dbReference>
<dbReference type="SUPFAM" id="SSF54106">
    <property type="entry name" value="LysM domain"/>
    <property type="match status" value="2"/>
</dbReference>
<dbReference type="PROSITE" id="PS51910">
    <property type="entry name" value="GH18_2"/>
    <property type="match status" value="1"/>
</dbReference>
<dbReference type="PROSITE" id="PS51782">
    <property type="entry name" value="LYSM"/>
    <property type="match status" value="2"/>
</dbReference>
<organism>
    <name type="scientific">Bacillus subtilis (strain 168)</name>
    <dbReference type="NCBI Taxonomy" id="224308"/>
    <lineage>
        <taxon>Bacteria</taxon>
        <taxon>Bacillati</taxon>
        <taxon>Bacillota</taxon>
        <taxon>Bacilli</taxon>
        <taxon>Bacillales</taxon>
        <taxon>Bacillaceae</taxon>
        <taxon>Bacillus</taxon>
    </lineage>
</organism>
<accession>P37531</accession>
<comment type="function">
    <text evidence="1">N-acetylglucosaminidase involved in cortex peptidoglycan degradation during germination. Cleaves only partially degraded spore peptidoglycans. Recognizes muramic acid delta-lactam residues specific to spore peptidoglycans.</text>
</comment>
<comment type="subcellular location">
    <subcellularLocation>
        <location evidence="6">Spore coat</location>
    </subcellularLocation>
    <text evidence="6">Probably present in the inner coat.</text>
</comment>
<comment type="developmental stage">
    <text evidence="4">Expressed in the mother cell compartment from T2 of sporulation.</text>
</comment>
<comment type="induction">
    <text evidence="4">Expression is regulated by the sporulation transcription factor sigma E.</text>
</comment>
<comment type="disruption phenotype">
    <text evidence="4 5">Inactivation of the gene does not impair vegetative growth nor prevent the development of resistance to heat, chloroform and lysozyme (PubMed:10419957). According to Kodama et al, the germination of the mutant spores induced by L-alanine is defective. However Chirakkal et al reported that the mutant shows wild-type germination kinetics in L-alanine (PubMed:10419957, PubMed:12177332).</text>
</comment>
<comment type="similarity">
    <text evidence="7">Belongs to the glycosyl hydrolase 18 family. Chitinase class II subfamily.</text>
</comment>
<comment type="caution">
    <text evidence="8">Was originally thought to have epimerase activity.</text>
</comment>
<comment type="sequence caution" evidence="7">
    <conflict type="erroneous initiation">
        <sequence resource="EMBL-CDS" id="BAA05252"/>
    </conflict>
    <text>Truncated N-terminus.</text>
</comment>
<comment type="sequence caution" evidence="7">
    <conflict type="erroneous initiation">
        <sequence resource="EMBL-CDS" id="CAB11792"/>
    </conflict>
    <text>Truncated N-terminus.</text>
</comment>
<protein>
    <recommendedName>
        <fullName evidence="1">Cortical fragment-lytic enzyme</fullName>
        <shortName evidence="1">CFLE</shortName>
        <ecNumber evidence="1">3.2.1.-</ecNumber>
    </recommendedName>
    <alternativeName>
        <fullName evidence="7">Spore germination protein</fullName>
    </alternativeName>
    <alternativeName>
        <fullName evidence="9">Spore peptidoglycan N-acetylglucosaminidase</fullName>
    </alternativeName>
</protein>
<name>SLEL_BACSU</name>
<keyword id="KW-0903">Direct protein sequencing</keyword>
<keyword id="KW-0309">Germination</keyword>
<keyword id="KW-0326">Glycosidase</keyword>
<keyword id="KW-0378">Hydrolase</keyword>
<keyword id="KW-1185">Reference proteome</keyword>
<keyword id="KW-0677">Repeat</keyword>
<evidence type="ECO:0000250" key="1">
    <source>
        <dbReference type="UniProtKB" id="Q9K3E4"/>
    </source>
</evidence>
<evidence type="ECO:0000255" key="2">
    <source>
        <dbReference type="PROSITE-ProRule" id="PRU01118"/>
    </source>
</evidence>
<evidence type="ECO:0000255" key="3">
    <source>
        <dbReference type="PROSITE-ProRule" id="PRU01258"/>
    </source>
</evidence>
<evidence type="ECO:0000269" key="4">
    <source>
    </source>
</evidence>
<evidence type="ECO:0000269" key="5">
    <source>
    </source>
</evidence>
<evidence type="ECO:0000269" key="6">
    <source>
    </source>
</evidence>
<evidence type="ECO:0000305" key="7"/>
<evidence type="ECO:0000305" key="8">
    <source>
    </source>
</evidence>
<evidence type="ECO:0000312" key="9">
    <source>
        <dbReference type="EMBL" id="CAB11792.1"/>
    </source>
</evidence>
<sequence>MQIYVVKQGDTLSAIASQYRTTTNDITETNEIPNPDSLVVGQTIVIPIAGQFYDVKRGDTLTSIARQFNTTAAELARVNRIQLNTVLQIGFRLYIPPAPKRDIESNAYLEPRGNQVSENLQQAAREASPYLTYLGAFSFQAQRNGTLVAPPLTNLRSITESQNTTLMMIITNLENQAFSDELGRILLNDETVKRRLLNEIVENARRYGFRDIHFDFEYLRPQDREAYNQFLREARDLFHREGLEISTALAPKTSATQQGRWYEAHDYRAHGEIVDFVVLMTYEWGYSGGPPQAVSPIGPVRDVIEYALTEMPANKIVMGQNLYGYDWTLPYTAGGTPARAVSPQQAIVIADQNNASIQYDQTAQAPFFRYTDAENRRHEVWFEDARSIQAKFNLIKELNLRGISYWKLGLSFPQNWLLLSDQFNVVKKTFR</sequence>